<gene>
    <name type="primary">MAPK1IP1L</name>
</gene>
<evidence type="ECO:0000250" key="1">
    <source>
        <dbReference type="UniProtKB" id="Q8NDC0"/>
    </source>
</evidence>
<evidence type="ECO:0000256" key="2">
    <source>
        <dbReference type="SAM" id="MobiDB-lite"/>
    </source>
</evidence>
<evidence type="ECO:0000305" key="3"/>
<protein>
    <recommendedName>
        <fullName>MAPK-interacting and spindle-stabilizing protein-like</fullName>
    </recommendedName>
    <alternativeName>
        <fullName>Mitogen-activated protein kinase 1-interacting protein 1-like</fullName>
    </alternativeName>
</protein>
<name>MISSL_BOVIN</name>
<dbReference type="EMBL" id="BT020907">
    <property type="protein sequence ID" value="AAX08924.1"/>
    <property type="molecule type" value="mRNA"/>
</dbReference>
<dbReference type="RefSeq" id="NP_001014963.1">
    <property type="nucleotide sequence ID" value="NM_001014963.2"/>
</dbReference>
<dbReference type="RefSeq" id="XP_059746567.1">
    <property type="nucleotide sequence ID" value="XM_059890584.1"/>
</dbReference>
<dbReference type="RefSeq" id="XP_059746568.1">
    <property type="nucleotide sequence ID" value="XM_059890585.1"/>
</dbReference>
<dbReference type="FunCoup" id="Q5E9L3">
    <property type="interactions" value="2094"/>
</dbReference>
<dbReference type="STRING" id="9913.ENSBTAP00000041324"/>
<dbReference type="PaxDb" id="9913-ENSBTAP00000041324"/>
<dbReference type="Ensembl" id="ENSBTAT00000043779.4">
    <property type="protein sequence ID" value="ENSBTAP00000041324.3"/>
    <property type="gene ID" value="ENSBTAG00000021986.6"/>
</dbReference>
<dbReference type="GeneID" id="540411"/>
<dbReference type="KEGG" id="bta:540411"/>
<dbReference type="CTD" id="93487"/>
<dbReference type="VEuPathDB" id="HostDB:ENSBTAG00000021986"/>
<dbReference type="VGNC" id="VGNC:31218">
    <property type="gene designation" value="MAPK1IP1L"/>
</dbReference>
<dbReference type="eggNOG" id="ENOG502RYAB">
    <property type="taxonomic scope" value="Eukaryota"/>
</dbReference>
<dbReference type="GeneTree" id="ENSGT00730000111340"/>
<dbReference type="HOGENOM" id="CLU_063887_0_0_1"/>
<dbReference type="InParanoid" id="Q5E9L3"/>
<dbReference type="OMA" id="TPSMPYP"/>
<dbReference type="OrthoDB" id="9398504at2759"/>
<dbReference type="Proteomes" id="UP000009136">
    <property type="component" value="Chromosome 10"/>
</dbReference>
<dbReference type="Bgee" id="ENSBTAG00000021986">
    <property type="expression patterns" value="Expressed in abdominal lymph node and 106 other cell types or tissues"/>
</dbReference>
<dbReference type="InterPro" id="IPR031653">
    <property type="entry name" value="MISS"/>
</dbReference>
<dbReference type="PANTHER" id="PTHR35973">
    <property type="entry name" value="MAPK-INTERACTING AND SPINDLE-STABILIZING PROTEIN-LIKE"/>
    <property type="match status" value="1"/>
</dbReference>
<dbReference type="PANTHER" id="PTHR35973:SF1">
    <property type="entry name" value="MAPK-INTERACTING AND SPINDLE-STABILIZING PROTEIN-LIKE"/>
    <property type="match status" value="1"/>
</dbReference>
<dbReference type="Pfam" id="PF15822">
    <property type="entry name" value="MISS"/>
    <property type="match status" value="1"/>
</dbReference>
<dbReference type="PRINTS" id="PR01217">
    <property type="entry name" value="PRICHEXTENSN"/>
</dbReference>
<organism>
    <name type="scientific">Bos taurus</name>
    <name type="common">Bovine</name>
    <dbReference type="NCBI Taxonomy" id="9913"/>
    <lineage>
        <taxon>Eukaryota</taxon>
        <taxon>Metazoa</taxon>
        <taxon>Chordata</taxon>
        <taxon>Craniata</taxon>
        <taxon>Vertebrata</taxon>
        <taxon>Euteleostomi</taxon>
        <taxon>Mammalia</taxon>
        <taxon>Eutheria</taxon>
        <taxon>Laurasiatheria</taxon>
        <taxon>Artiodactyla</taxon>
        <taxon>Ruminantia</taxon>
        <taxon>Pecora</taxon>
        <taxon>Bovidae</taxon>
        <taxon>Bovinae</taxon>
        <taxon>Bos</taxon>
    </lineage>
</organism>
<accession>Q5E9L3</accession>
<proteinExistence type="evidence at transcript level"/>
<reference key="1">
    <citation type="journal article" date="2005" name="BMC Genomics">
        <title>Characterization of 954 bovine full-CDS cDNA sequences.</title>
        <authorList>
            <person name="Harhay G.P."/>
            <person name="Sonstegard T.S."/>
            <person name="Keele J.W."/>
            <person name="Heaton M.P."/>
            <person name="Clawson M.L."/>
            <person name="Snelling W.M."/>
            <person name="Wiedmann R.T."/>
            <person name="Van Tassell C.P."/>
            <person name="Smith T.P.L."/>
        </authorList>
    </citation>
    <scope>NUCLEOTIDE SEQUENCE [LARGE SCALE MRNA]</scope>
</reference>
<feature type="initiator methionine" description="Removed" evidence="1">
    <location>
        <position position="1"/>
    </location>
</feature>
<feature type="chain" id="PRO_0000209889" description="MAPK-interacting and spindle-stabilizing protein-like">
    <location>
        <begin position="2"/>
        <end position="240"/>
    </location>
</feature>
<feature type="region of interest" description="Disordered" evidence="2">
    <location>
        <begin position="1"/>
        <end position="240"/>
    </location>
</feature>
<feature type="compositionally biased region" description="Polar residues" evidence="2">
    <location>
        <begin position="16"/>
        <end position="26"/>
    </location>
</feature>
<feature type="compositionally biased region" description="Low complexity" evidence="2">
    <location>
        <begin position="34"/>
        <end position="43"/>
    </location>
</feature>
<feature type="compositionally biased region" description="Pro residues" evidence="2">
    <location>
        <begin position="44"/>
        <end position="66"/>
    </location>
</feature>
<feature type="compositionally biased region" description="Pro residues" evidence="2">
    <location>
        <begin position="74"/>
        <end position="122"/>
    </location>
</feature>
<feature type="compositionally biased region" description="Pro residues" evidence="2">
    <location>
        <begin position="159"/>
        <end position="185"/>
    </location>
</feature>
<feature type="compositionally biased region" description="Pro residues" evidence="2">
    <location>
        <begin position="193"/>
        <end position="202"/>
    </location>
</feature>
<feature type="modified residue" description="N-acetylserine" evidence="1">
    <location>
        <position position="2"/>
    </location>
</feature>
<feature type="modified residue" description="Phosphoserine" evidence="1">
    <location>
        <position position="2"/>
    </location>
</feature>
<feature type="modified residue" description="Phosphoserine" evidence="1">
    <location>
        <position position="6"/>
    </location>
</feature>
<feature type="modified residue" description="Phosphoserine" evidence="1">
    <location>
        <position position="15"/>
    </location>
</feature>
<sequence length="240" mass="23798">MSDEFSLADALPENSPAKTSAVSNTKPGQPPQGWPGSNPWNNPSAPPAVPSGLPPSATPSPVPFGPTPTGMYPSVPPTGPPPGPPAPFPPSGPSCPPPGGPYPGPGPTGPYPTPNMPFPELPRPYGAPTDPAAAGPLGPWGSMSSGPWAPGMGGQYPTPNMPYPSPGPYPAPPPPQAPGAAPPVPWGTVPPGAWGPPAPYPAPAGSYPTPGLYPTPNNPFQVPSGPSGAPPMPGGPHSYH</sequence>
<comment type="similarity">
    <text evidence="3">Belongs to the MISS family.</text>
</comment>
<keyword id="KW-0007">Acetylation</keyword>
<keyword id="KW-0597">Phosphoprotein</keyword>
<keyword id="KW-1185">Reference proteome</keyword>